<reference key="1">
    <citation type="journal article" date="1996" name="Nucleic Acids Res.">
        <title>Complete sequence analysis of the genome of the bacterium Mycoplasma pneumoniae.</title>
        <authorList>
            <person name="Himmelreich R."/>
            <person name="Hilbert H."/>
            <person name="Plagens H."/>
            <person name="Pirkl E."/>
            <person name="Li B.-C."/>
            <person name="Herrmann R."/>
        </authorList>
    </citation>
    <scope>NUCLEOTIDE SEQUENCE [LARGE SCALE GENOMIC DNA]</scope>
    <source>
        <strain>ATCC 29342 / M129 / Subtype 1</strain>
    </source>
</reference>
<name>RL331_MYCPN</name>
<evidence type="ECO:0000255" key="1">
    <source>
        <dbReference type="HAMAP-Rule" id="MF_00294"/>
    </source>
</evidence>
<evidence type="ECO:0000305" key="2"/>
<evidence type="ECO:0007829" key="3">
    <source>
        <dbReference type="PDB" id="8P8B"/>
    </source>
</evidence>
<dbReference type="EMBL" id="U00089">
    <property type="protein sequence ID" value="AAB96018.1"/>
    <property type="molecule type" value="Genomic_DNA"/>
</dbReference>
<dbReference type="PIR" id="S73696">
    <property type="entry name" value="S73696"/>
</dbReference>
<dbReference type="RefSeq" id="NP_110159.1">
    <property type="nucleotide sequence ID" value="NC_000912.1"/>
</dbReference>
<dbReference type="RefSeq" id="WP_010874827.1">
    <property type="nucleotide sequence ID" value="NZ_OU342337.1"/>
</dbReference>
<dbReference type="PDB" id="7OOD">
    <property type="method" value="EM"/>
    <property type="resolution" value="3.40 A"/>
    <property type="chains" value="z=1-53"/>
</dbReference>
<dbReference type="PDB" id="7P6Z">
    <property type="method" value="EM"/>
    <property type="resolution" value="3.50 A"/>
    <property type="chains" value="z=1-53"/>
</dbReference>
<dbReference type="PDB" id="7PAH">
    <property type="method" value="EM"/>
    <property type="resolution" value="9.50 A"/>
    <property type="chains" value="z=1-53"/>
</dbReference>
<dbReference type="PDB" id="7PAI">
    <property type="method" value="EM"/>
    <property type="resolution" value="6.70 A"/>
    <property type="chains" value="z=1-53"/>
</dbReference>
<dbReference type="PDB" id="7PAJ">
    <property type="method" value="EM"/>
    <property type="resolution" value="7.30 A"/>
    <property type="chains" value="z=1-53"/>
</dbReference>
<dbReference type="PDB" id="7PAK">
    <property type="method" value="EM"/>
    <property type="resolution" value="5.30 A"/>
    <property type="chains" value="z=1-53"/>
</dbReference>
<dbReference type="PDB" id="7PAL">
    <property type="method" value="EM"/>
    <property type="resolution" value="4.70 A"/>
    <property type="chains" value="z=1-53"/>
</dbReference>
<dbReference type="PDB" id="7PAM">
    <property type="method" value="EM"/>
    <property type="resolution" value="6.80 A"/>
    <property type="chains" value="z=1-53"/>
</dbReference>
<dbReference type="PDB" id="7PAN">
    <property type="method" value="EM"/>
    <property type="resolution" value="9.70 A"/>
    <property type="chains" value="z=1-53"/>
</dbReference>
<dbReference type="PDB" id="7PAO">
    <property type="method" value="EM"/>
    <property type="resolution" value="7.00 A"/>
    <property type="chains" value="z=1-53"/>
</dbReference>
<dbReference type="PDB" id="7PAQ">
    <property type="method" value="EM"/>
    <property type="resolution" value="8.90 A"/>
    <property type="chains" value="z=1-53"/>
</dbReference>
<dbReference type="PDB" id="7PAR">
    <property type="method" value="EM"/>
    <property type="resolution" value="8.20 A"/>
    <property type="chains" value="z=1-53"/>
</dbReference>
<dbReference type="PDB" id="7PAS">
    <property type="method" value="EM"/>
    <property type="resolution" value="16.00 A"/>
    <property type="chains" value="z=1-53"/>
</dbReference>
<dbReference type="PDB" id="7PAT">
    <property type="method" value="EM"/>
    <property type="resolution" value="9.20 A"/>
    <property type="chains" value="z=1-53"/>
</dbReference>
<dbReference type="PDB" id="7PAU">
    <property type="method" value="EM"/>
    <property type="resolution" value="8.30 A"/>
    <property type="chains" value="z=1-53"/>
</dbReference>
<dbReference type="PDB" id="7PH9">
    <property type="method" value="EM"/>
    <property type="resolution" value="8.70 A"/>
    <property type="chains" value="z=1-53"/>
</dbReference>
<dbReference type="PDB" id="7PHA">
    <property type="method" value="EM"/>
    <property type="resolution" value="8.50 A"/>
    <property type="chains" value="z=1-53"/>
</dbReference>
<dbReference type="PDB" id="7PHB">
    <property type="method" value="EM"/>
    <property type="resolution" value="4.90 A"/>
    <property type="chains" value="z=1-53"/>
</dbReference>
<dbReference type="PDB" id="7PHC">
    <property type="method" value="EM"/>
    <property type="resolution" value="9.90 A"/>
    <property type="chains" value="z=1-53"/>
</dbReference>
<dbReference type="PDB" id="7PI8">
    <property type="method" value="EM"/>
    <property type="resolution" value="8.90 A"/>
    <property type="chains" value="z=1-53"/>
</dbReference>
<dbReference type="PDB" id="7PI9">
    <property type="method" value="EM"/>
    <property type="resolution" value="6.30 A"/>
    <property type="chains" value="z=1-53"/>
</dbReference>
<dbReference type="PDB" id="7PIA">
    <property type="method" value="EM"/>
    <property type="resolution" value="13.60 A"/>
    <property type="chains" value="z=1-53"/>
</dbReference>
<dbReference type="PDB" id="7PIB">
    <property type="method" value="EM"/>
    <property type="resolution" value="4.70 A"/>
    <property type="chains" value="z=1-53"/>
</dbReference>
<dbReference type="PDB" id="7PIC">
    <property type="method" value="EM"/>
    <property type="resolution" value="9.10 A"/>
    <property type="chains" value="z=1-53"/>
</dbReference>
<dbReference type="PDB" id="7PIO">
    <property type="method" value="EM"/>
    <property type="resolution" value="9.50 A"/>
    <property type="chains" value="z=1-53"/>
</dbReference>
<dbReference type="PDB" id="7PIP">
    <property type="method" value="EM"/>
    <property type="resolution" value="9.30 A"/>
    <property type="chains" value="z=1-53"/>
</dbReference>
<dbReference type="PDB" id="7PIQ">
    <property type="method" value="EM"/>
    <property type="resolution" value="9.70 A"/>
    <property type="chains" value="z=1-53"/>
</dbReference>
<dbReference type="PDB" id="7PIR">
    <property type="method" value="EM"/>
    <property type="resolution" value="12.10 A"/>
    <property type="chains" value="z=1-53"/>
</dbReference>
<dbReference type="PDB" id="7PIS">
    <property type="method" value="EM"/>
    <property type="resolution" value="15.00 A"/>
    <property type="chains" value="z=1-53"/>
</dbReference>
<dbReference type="PDB" id="7PIT">
    <property type="method" value="EM"/>
    <property type="resolution" value="5.70 A"/>
    <property type="chains" value="z=1-53"/>
</dbReference>
<dbReference type="PDB" id="8P7X">
    <property type="method" value="EM"/>
    <property type="resolution" value="3.03 A"/>
    <property type="chains" value="z=1-53"/>
</dbReference>
<dbReference type="PDB" id="8P7Y">
    <property type="method" value="EM"/>
    <property type="resolution" value="3.70 A"/>
    <property type="chains" value="z=1-53"/>
</dbReference>
<dbReference type="PDB" id="8P8B">
    <property type="method" value="EM"/>
    <property type="resolution" value="2.90 A"/>
    <property type="chains" value="z=1-53"/>
</dbReference>
<dbReference type="PDB" id="8P8V">
    <property type="method" value="EM"/>
    <property type="resolution" value="8.70 A"/>
    <property type="chains" value="z=1-53"/>
</dbReference>
<dbReference type="PDB" id="8P8W">
    <property type="method" value="EM"/>
    <property type="resolution" value="8.70 A"/>
    <property type="chains" value="z=1-53"/>
</dbReference>
<dbReference type="PDBsum" id="7OOD"/>
<dbReference type="PDBsum" id="7P6Z"/>
<dbReference type="PDBsum" id="7PAH"/>
<dbReference type="PDBsum" id="7PAI"/>
<dbReference type="PDBsum" id="7PAJ"/>
<dbReference type="PDBsum" id="7PAK"/>
<dbReference type="PDBsum" id="7PAL"/>
<dbReference type="PDBsum" id="7PAM"/>
<dbReference type="PDBsum" id="7PAN"/>
<dbReference type="PDBsum" id="7PAO"/>
<dbReference type="PDBsum" id="7PAQ"/>
<dbReference type="PDBsum" id="7PAR"/>
<dbReference type="PDBsum" id="7PAS"/>
<dbReference type="PDBsum" id="7PAT"/>
<dbReference type="PDBsum" id="7PAU"/>
<dbReference type="PDBsum" id="7PH9"/>
<dbReference type="PDBsum" id="7PHA"/>
<dbReference type="PDBsum" id="7PHB"/>
<dbReference type="PDBsum" id="7PHC"/>
<dbReference type="PDBsum" id="7PI8"/>
<dbReference type="PDBsum" id="7PI9"/>
<dbReference type="PDBsum" id="7PIA"/>
<dbReference type="PDBsum" id="7PIB"/>
<dbReference type="PDBsum" id="7PIC"/>
<dbReference type="PDBsum" id="7PIO"/>
<dbReference type="PDBsum" id="7PIP"/>
<dbReference type="PDBsum" id="7PIQ"/>
<dbReference type="PDBsum" id="7PIR"/>
<dbReference type="PDBsum" id="7PIS"/>
<dbReference type="PDBsum" id="7PIT"/>
<dbReference type="PDBsum" id="8P7X"/>
<dbReference type="PDBsum" id="8P7Y"/>
<dbReference type="PDBsum" id="8P8B"/>
<dbReference type="PDBsum" id="8P8V"/>
<dbReference type="PDBsum" id="8P8W"/>
<dbReference type="EMDB" id="EMD-13234"/>
<dbReference type="EMDB" id="EMD-13272"/>
<dbReference type="EMDB" id="EMD-13273"/>
<dbReference type="EMDB" id="EMD-13274"/>
<dbReference type="EMDB" id="EMD-13275"/>
<dbReference type="EMDB" id="EMD-13276"/>
<dbReference type="EMDB" id="EMD-13277"/>
<dbReference type="EMDB" id="EMD-13278"/>
<dbReference type="EMDB" id="EMD-13279"/>
<dbReference type="EMDB" id="EMD-13280"/>
<dbReference type="EMDB" id="EMD-13281"/>
<dbReference type="EMDB" id="EMD-13282"/>
<dbReference type="EMDB" id="EMD-13285"/>
<dbReference type="EMDB" id="EMD-13286"/>
<dbReference type="EMDB" id="EMD-13410"/>
<dbReference type="EMDB" id="EMD-13411"/>
<dbReference type="EMDB" id="EMD-13412"/>
<dbReference type="EMDB" id="EMD-13413"/>
<dbReference type="EMDB" id="EMD-13432"/>
<dbReference type="EMDB" id="EMD-13433"/>
<dbReference type="EMDB" id="EMD-13434"/>
<dbReference type="EMDB" id="EMD-13435"/>
<dbReference type="EMDB" id="EMD-13436"/>
<dbReference type="EMDB" id="EMD-13445"/>
<dbReference type="EMDB" id="EMD-13446"/>
<dbReference type="EMDB" id="EMD-13447"/>
<dbReference type="EMDB" id="EMD-13448"/>
<dbReference type="EMDB" id="EMD-13449"/>
<dbReference type="EMDB" id="EMD-13450"/>
<dbReference type="SMR" id="P78015"/>
<dbReference type="IntAct" id="P78015">
    <property type="interactions" value="1"/>
</dbReference>
<dbReference type="STRING" id="272634.MPN_471"/>
<dbReference type="EnsemblBacteria" id="AAB96018">
    <property type="protein sequence ID" value="AAB96018"/>
    <property type="gene ID" value="MPN_471"/>
</dbReference>
<dbReference type="GeneID" id="66608856"/>
<dbReference type="KEGG" id="mpn:MPN_471"/>
<dbReference type="PATRIC" id="fig|272634.6.peg.509"/>
<dbReference type="HOGENOM" id="CLU_190949_0_2_14"/>
<dbReference type="OrthoDB" id="9801333at2"/>
<dbReference type="BioCyc" id="MPNE272634:G1GJ3-774-MONOMER"/>
<dbReference type="Proteomes" id="UP000000808">
    <property type="component" value="Chromosome"/>
</dbReference>
<dbReference type="GO" id="GO:0005737">
    <property type="term" value="C:cytoplasm"/>
    <property type="evidence" value="ECO:0007669"/>
    <property type="project" value="UniProtKB-ARBA"/>
</dbReference>
<dbReference type="GO" id="GO:1990904">
    <property type="term" value="C:ribonucleoprotein complex"/>
    <property type="evidence" value="ECO:0007669"/>
    <property type="project" value="UniProtKB-KW"/>
</dbReference>
<dbReference type="GO" id="GO:0005840">
    <property type="term" value="C:ribosome"/>
    <property type="evidence" value="ECO:0007669"/>
    <property type="project" value="UniProtKB-KW"/>
</dbReference>
<dbReference type="GO" id="GO:0003735">
    <property type="term" value="F:structural constituent of ribosome"/>
    <property type="evidence" value="ECO:0007669"/>
    <property type="project" value="InterPro"/>
</dbReference>
<dbReference type="GO" id="GO:0006412">
    <property type="term" value="P:translation"/>
    <property type="evidence" value="ECO:0007669"/>
    <property type="project" value="UniProtKB-UniRule"/>
</dbReference>
<dbReference type="Gene3D" id="2.20.28.120">
    <property type="entry name" value="Ribosomal protein L33"/>
    <property type="match status" value="1"/>
</dbReference>
<dbReference type="HAMAP" id="MF_00294">
    <property type="entry name" value="Ribosomal_bL33"/>
    <property type="match status" value="1"/>
</dbReference>
<dbReference type="InterPro" id="IPR001705">
    <property type="entry name" value="Ribosomal_bL33"/>
</dbReference>
<dbReference type="InterPro" id="IPR018264">
    <property type="entry name" value="Ribosomal_bL33_CS"/>
</dbReference>
<dbReference type="InterPro" id="IPR038584">
    <property type="entry name" value="Ribosomal_bL33_sf"/>
</dbReference>
<dbReference type="InterPro" id="IPR011332">
    <property type="entry name" value="Ribosomal_zn-bd"/>
</dbReference>
<dbReference type="NCBIfam" id="NF001764">
    <property type="entry name" value="PRK00504.1"/>
    <property type="match status" value="1"/>
</dbReference>
<dbReference type="NCBIfam" id="NF001860">
    <property type="entry name" value="PRK00595.1"/>
    <property type="match status" value="1"/>
</dbReference>
<dbReference type="NCBIfam" id="TIGR01023">
    <property type="entry name" value="rpmG_bact"/>
    <property type="match status" value="1"/>
</dbReference>
<dbReference type="Pfam" id="PF00471">
    <property type="entry name" value="Ribosomal_L33"/>
    <property type="match status" value="1"/>
</dbReference>
<dbReference type="SUPFAM" id="SSF57829">
    <property type="entry name" value="Zn-binding ribosomal proteins"/>
    <property type="match status" value="1"/>
</dbReference>
<dbReference type="PROSITE" id="PS00582">
    <property type="entry name" value="RIBOSOMAL_L33"/>
    <property type="match status" value="1"/>
</dbReference>
<keyword id="KW-0002">3D-structure</keyword>
<keyword id="KW-1185">Reference proteome</keyword>
<keyword id="KW-0687">Ribonucleoprotein</keyword>
<keyword id="KW-0689">Ribosomal protein</keyword>
<proteinExistence type="evidence at protein level"/>
<accession>P78015</accession>
<protein>
    <recommendedName>
        <fullName evidence="1">Large ribosomal subunit protein bL33A</fullName>
    </recommendedName>
    <alternativeName>
        <fullName>50S ribosomal protein L33 1</fullName>
    </alternativeName>
</protein>
<comment type="similarity">
    <text evidence="2">Belongs to the bacterial ribosomal protein bL33 family.</text>
</comment>
<sequence>MAVKRSTRLGCNDCREINYLTFKNVKKNPEKLALNKFCSRCRKVVVHKEVKRK</sequence>
<organism>
    <name type="scientific">Mycoplasma pneumoniae (strain ATCC 29342 / M129 / Subtype 1)</name>
    <name type="common">Mycoplasmoides pneumoniae</name>
    <dbReference type="NCBI Taxonomy" id="272634"/>
    <lineage>
        <taxon>Bacteria</taxon>
        <taxon>Bacillati</taxon>
        <taxon>Mycoplasmatota</taxon>
        <taxon>Mycoplasmoidales</taxon>
        <taxon>Mycoplasmoidaceae</taxon>
        <taxon>Mycoplasmoides</taxon>
    </lineage>
</organism>
<gene>
    <name type="primary">rpmG1</name>
    <name type="synonym">rpmG</name>
    <name type="ordered locus">MPN_471</name>
    <name type="ORF">MP370</name>
</gene>
<feature type="chain" id="PRO_0000170190" description="Large ribosomal subunit protein bL33A">
    <location>
        <begin position="1"/>
        <end position="53"/>
    </location>
</feature>
<feature type="strand" evidence="3">
    <location>
        <begin position="6"/>
        <end position="14"/>
    </location>
</feature>
<feature type="strand" evidence="3">
    <location>
        <begin position="17"/>
        <end position="22"/>
    </location>
</feature>
<feature type="turn" evidence="3">
    <location>
        <begin position="25"/>
        <end position="27"/>
    </location>
</feature>
<feature type="strand" evidence="3">
    <location>
        <begin position="33"/>
        <end position="38"/>
    </location>
</feature>
<feature type="turn" evidence="3">
    <location>
        <begin position="39"/>
        <end position="42"/>
    </location>
</feature>
<feature type="strand" evidence="3">
    <location>
        <begin position="43"/>
        <end position="50"/>
    </location>
</feature>